<keyword id="KW-0040">ANK repeat</keyword>
<keyword id="KW-0175">Coiled coil</keyword>
<keyword id="KW-0539">Nucleus</keyword>
<keyword id="KW-1267">Proteomics identification</keyword>
<keyword id="KW-1185">Reference proteome</keyword>
<keyword id="KW-0677">Repeat</keyword>
<feature type="chain" id="PRO_0000240479" description="Ankyrin repeat domain-containing protein 1">
    <location>
        <begin position="1"/>
        <end position="319"/>
    </location>
</feature>
<feature type="repeat" description="ANK 1">
    <location>
        <begin position="152"/>
        <end position="181"/>
    </location>
</feature>
<feature type="repeat" description="ANK 2">
    <location>
        <begin position="185"/>
        <end position="214"/>
    </location>
</feature>
<feature type="repeat" description="ANK 3">
    <location>
        <begin position="218"/>
        <end position="247"/>
    </location>
</feature>
<feature type="repeat" description="ANK 4">
    <location>
        <begin position="251"/>
        <end position="280"/>
    </location>
</feature>
<feature type="repeat" description="ANK 5">
    <location>
        <begin position="284"/>
        <end position="315"/>
    </location>
</feature>
<feature type="coiled-coil region" evidence="2">
    <location>
        <begin position="61"/>
        <end position="89"/>
    </location>
</feature>
<feature type="sequence variant" id="VAR_047112" description="Found in a sporadic case of total anomalous pulmonary venous return; uncertain significance; dbSNP:rs142354133." evidence="5">
    <original>T</original>
    <variation>M</variation>
    <location>
        <position position="116"/>
    </location>
</feature>
<feature type="sequence conflict" description="In Ref. 1; CAA58676." evidence="7" ref="1">
    <original>K</original>
    <variation>P</variation>
    <location>
        <position position="71"/>
    </location>
</feature>
<protein>
    <recommendedName>
        <fullName>Ankyrin repeat domain-containing protein 1</fullName>
    </recommendedName>
    <alternativeName>
        <fullName>Cardiac ankyrin repeat protein</fullName>
    </alternativeName>
    <alternativeName>
        <fullName>Cytokine-inducible gene C-193 protein</fullName>
    </alternativeName>
    <alternativeName>
        <fullName>Cytokine-inducible nuclear protein</fullName>
    </alternativeName>
</protein>
<accession>Q15327</accession>
<accession>Q96LE7</accession>
<name>ANKR1_HUMAN</name>
<dbReference type="EMBL" id="X83703">
    <property type="protein sequence ID" value="CAA58676.1"/>
    <property type="molecule type" value="mRNA"/>
</dbReference>
<dbReference type="EMBL" id="AY903446">
    <property type="protein sequence ID" value="AAX23581.1"/>
    <property type="molecule type" value="mRNA"/>
</dbReference>
<dbReference type="EMBL" id="AL590622">
    <property type="status" value="NOT_ANNOTATED_CDS"/>
    <property type="molecule type" value="Genomic_DNA"/>
</dbReference>
<dbReference type="EMBL" id="BC018667">
    <property type="protein sequence ID" value="AAH18667.1"/>
    <property type="molecule type" value="mRNA"/>
</dbReference>
<dbReference type="CCDS" id="CCDS7412.1"/>
<dbReference type="PIR" id="A57291">
    <property type="entry name" value="A57291"/>
</dbReference>
<dbReference type="RefSeq" id="NP_055206.2">
    <property type="nucleotide sequence ID" value="NM_014391.2"/>
</dbReference>
<dbReference type="SMR" id="Q15327"/>
<dbReference type="BioGRID" id="117975">
    <property type="interactions" value="27"/>
</dbReference>
<dbReference type="CORUM" id="Q15327"/>
<dbReference type="FunCoup" id="Q15327">
    <property type="interactions" value="1103"/>
</dbReference>
<dbReference type="IntAct" id="Q15327">
    <property type="interactions" value="20"/>
</dbReference>
<dbReference type="STRING" id="9606.ENSP00000360762"/>
<dbReference type="iPTMnet" id="Q15327"/>
<dbReference type="PhosphoSitePlus" id="Q15327"/>
<dbReference type="BioMuta" id="ANKRD1"/>
<dbReference type="DMDM" id="109940213"/>
<dbReference type="jPOST" id="Q15327"/>
<dbReference type="MassIVE" id="Q15327"/>
<dbReference type="PaxDb" id="9606-ENSP00000360762"/>
<dbReference type="PeptideAtlas" id="Q15327"/>
<dbReference type="ProteomicsDB" id="60530"/>
<dbReference type="Pumba" id="Q15327"/>
<dbReference type="Antibodypedia" id="30337">
    <property type="antibodies" value="257 antibodies from 28 providers"/>
</dbReference>
<dbReference type="DNASU" id="27063"/>
<dbReference type="Ensembl" id="ENST00000371697.4">
    <property type="protein sequence ID" value="ENSP00000360762.3"/>
    <property type="gene ID" value="ENSG00000148677.7"/>
</dbReference>
<dbReference type="GeneID" id="27063"/>
<dbReference type="KEGG" id="hsa:27063"/>
<dbReference type="MANE-Select" id="ENST00000371697.4">
    <property type="protein sequence ID" value="ENSP00000360762.3"/>
    <property type="RefSeq nucleotide sequence ID" value="NM_014391.3"/>
    <property type="RefSeq protein sequence ID" value="NP_055206.2"/>
</dbReference>
<dbReference type="UCSC" id="uc001khe.2">
    <property type="organism name" value="human"/>
</dbReference>
<dbReference type="AGR" id="HGNC:15819"/>
<dbReference type="CTD" id="27063"/>
<dbReference type="DisGeNET" id="27063"/>
<dbReference type="GeneCards" id="ANKRD1"/>
<dbReference type="GeneReviews" id="ANKRD1"/>
<dbReference type="HGNC" id="HGNC:15819">
    <property type="gene designation" value="ANKRD1"/>
</dbReference>
<dbReference type="HPA" id="ENSG00000148677">
    <property type="expression patterns" value="Tissue enriched (heart)"/>
</dbReference>
<dbReference type="MalaCards" id="ANKRD1"/>
<dbReference type="MIM" id="609599">
    <property type="type" value="gene"/>
</dbReference>
<dbReference type="neXtProt" id="NX_Q15327"/>
<dbReference type="OpenTargets" id="ENSG00000148677"/>
<dbReference type="Orphanet" id="154">
    <property type="disease" value="Familial isolated dilated cardiomyopathy"/>
</dbReference>
<dbReference type="PharmGKB" id="PA134882768"/>
<dbReference type="VEuPathDB" id="HostDB:ENSG00000148677"/>
<dbReference type="eggNOG" id="KOG0504">
    <property type="taxonomic scope" value="Eukaryota"/>
</dbReference>
<dbReference type="GeneTree" id="ENSGT00940000153956"/>
<dbReference type="HOGENOM" id="CLU_000134_11_1_1"/>
<dbReference type="InParanoid" id="Q15327"/>
<dbReference type="OMA" id="QYDCGEH"/>
<dbReference type="OrthoDB" id="426293at2759"/>
<dbReference type="PAN-GO" id="Q15327">
    <property type="GO annotations" value="3 GO annotations based on evolutionary models"/>
</dbReference>
<dbReference type="PhylomeDB" id="Q15327"/>
<dbReference type="TreeFam" id="TF331650"/>
<dbReference type="PathwayCommons" id="Q15327"/>
<dbReference type="Reactome" id="R-HSA-1989781">
    <property type="pathway name" value="PPARA activates gene expression"/>
</dbReference>
<dbReference type="SignaLink" id="Q15327"/>
<dbReference type="SIGNOR" id="Q15327"/>
<dbReference type="BioGRID-ORCS" id="27063">
    <property type="hits" value="16 hits in 1154 CRISPR screens"/>
</dbReference>
<dbReference type="ChiTaRS" id="ANKRD1">
    <property type="organism name" value="human"/>
</dbReference>
<dbReference type="GeneWiki" id="ANKRD1"/>
<dbReference type="GenomeRNAi" id="27063"/>
<dbReference type="Pharos" id="Q15327">
    <property type="development level" value="Tbio"/>
</dbReference>
<dbReference type="PRO" id="PR:Q15327"/>
<dbReference type="Proteomes" id="UP000005640">
    <property type="component" value="Chromosome 10"/>
</dbReference>
<dbReference type="RNAct" id="Q15327">
    <property type="molecule type" value="protein"/>
</dbReference>
<dbReference type="Bgee" id="ENSG00000148677">
    <property type="expression patterns" value="Expressed in apex of heart and 97 other cell types or tissues"/>
</dbReference>
<dbReference type="ExpressionAtlas" id="Q15327">
    <property type="expression patterns" value="baseline and differential"/>
</dbReference>
<dbReference type="GO" id="GO:0005737">
    <property type="term" value="C:cytoplasm"/>
    <property type="evidence" value="ECO:0000314"/>
    <property type="project" value="UniProtKB"/>
</dbReference>
<dbReference type="GO" id="GO:0005829">
    <property type="term" value="C:cytosol"/>
    <property type="evidence" value="ECO:0000314"/>
    <property type="project" value="BHF-UCL"/>
</dbReference>
<dbReference type="GO" id="GO:0001650">
    <property type="term" value="C:fibrillar center"/>
    <property type="evidence" value="ECO:0000314"/>
    <property type="project" value="HPA"/>
</dbReference>
<dbReference type="GO" id="GO:0031674">
    <property type="term" value="C:I band"/>
    <property type="evidence" value="ECO:0000250"/>
    <property type="project" value="BHF-UCL"/>
</dbReference>
<dbReference type="GO" id="GO:0005654">
    <property type="term" value="C:nucleoplasm"/>
    <property type="evidence" value="ECO:0000314"/>
    <property type="project" value="HPA"/>
</dbReference>
<dbReference type="GO" id="GO:0005634">
    <property type="term" value="C:nucleus"/>
    <property type="evidence" value="ECO:0000314"/>
    <property type="project" value="BHF-UCL"/>
</dbReference>
<dbReference type="GO" id="GO:0005667">
    <property type="term" value="C:transcription regulator complex"/>
    <property type="evidence" value="ECO:0007669"/>
    <property type="project" value="Ensembl"/>
</dbReference>
<dbReference type="GO" id="GO:0003677">
    <property type="term" value="F:DNA binding"/>
    <property type="evidence" value="ECO:0000314"/>
    <property type="project" value="BHF-UCL"/>
</dbReference>
<dbReference type="GO" id="GO:0042826">
    <property type="term" value="F:histone deacetylase binding"/>
    <property type="evidence" value="ECO:0000353"/>
    <property type="project" value="BHF-UCL"/>
</dbReference>
<dbReference type="GO" id="GO:0002039">
    <property type="term" value="F:p53 binding"/>
    <property type="evidence" value="ECO:0000353"/>
    <property type="project" value="BHF-UCL"/>
</dbReference>
<dbReference type="GO" id="GO:0070412">
    <property type="term" value="F:R-SMAD binding"/>
    <property type="evidence" value="ECO:0000353"/>
    <property type="project" value="BHF-UCL"/>
</dbReference>
<dbReference type="GO" id="GO:0061629">
    <property type="term" value="F:RNA polymerase II-specific DNA-binding transcription factor binding"/>
    <property type="evidence" value="ECO:0000353"/>
    <property type="project" value="BHF-UCL"/>
</dbReference>
<dbReference type="GO" id="GO:0031432">
    <property type="term" value="F:titin binding"/>
    <property type="evidence" value="ECO:0000353"/>
    <property type="project" value="BHF-UCL"/>
</dbReference>
<dbReference type="GO" id="GO:0003713">
    <property type="term" value="F:transcription coactivator activity"/>
    <property type="evidence" value="ECO:0000314"/>
    <property type="project" value="BHF-UCL"/>
</dbReference>
<dbReference type="GO" id="GO:0003714">
    <property type="term" value="F:transcription corepressor activity"/>
    <property type="evidence" value="ECO:0000304"/>
    <property type="project" value="BHF-UCL"/>
</dbReference>
<dbReference type="GO" id="GO:0055008">
    <property type="term" value="P:cardiac muscle tissue morphogenesis"/>
    <property type="evidence" value="ECO:0000315"/>
    <property type="project" value="BHF-UCL"/>
</dbReference>
<dbReference type="GO" id="GO:0071456">
    <property type="term" value="P:cellular response to hypoxia"/>
    <property type="evidence" value="ECO:0007669"/>
    <property type="project" value="Ensembl"/>
</dbReference>
<dbReference type="GO" id="GO:0071347">
    <property type="term" value="P:cellular response to interleukin-1"/>
    <property type="evidence" value="ECO:0000314"/>
    <property type="project" value="BHF-UCL"/>
</dbReference>
<dbReference type="GO" id="GO:0071222">
    <property type="term" value="P:cellular response to lipopolysaccharide"/>
    <property type="evidence" value="ECO:0000314"/>
    <property type="project" value="BHF-UCL"/>
</dbReference>
<dbReference type="GO" id="GO:0071260">
    <property type="term" value="P:cellular response to mechanical stimulus"/>
    <property type="evidence" value="ECO:0000314"/>
    <property type="project" value="UniProtKB"/>
</dbReference>
<dbReference type="GO" id="GO:0071560">
    <property type="term" value="P:cellular response to transforming growth factor beta stimulus"/>
    <property type="evidence" value="ECO:0000314"/>
    <property type="project" value="BHF-UCL"/>
</dbReference>
<dbReference type="GO" id="GO:0071356">
    <property type="term" value="P:cellular response to tumor necrosis factor"/>
    <property type="evidence" value="ECO:0000314"/>
    <property type="project" value="BHF-UCL"/>
</dbReference>
<dbReference type="GO" id="GO:0071466">
    <property type="term" value="P:cellular response to xenobiotic stimulus"/>
    <property type="evidence" value="ECO:0007669"/>
    <property type="project" value="Ensembl"/>
</dbReference>
<dbReference type="GO" id="GO:2000279">
    <property type="term" value="P:negative regulation of DNA biosynthetic process"/>
    <property type="evidence" value="ECO:0000315"/>
    <property type="project" value="BHF-UCL"/>
</dbReference>
<dbReference type="GO" id="GO:0000122">
    <property type="term" value="P:negative regulation of transcription by RNA polymerase II"/>
    <property type="evidence" value="ECO:0007669"/>
    <property type="project" value="Ensembl"/>
</dbReference>
<dbReference type="GO" id="GO:0141212">
    <property type="term" value="P:phospholipase C/protein kinase C signal transduction"/>
    <property type="evidence" value="ECO:0007669"/>
    <property type="project" value="Ensembl"/>
</dbReference>
<dbReference type="GO" id="GO:0043065">
    <property type="term" value="P:positive regulation of apoptotic process"/>
    <property type="evidence" value="ECO:0000315"/>
    <property type="project" value="BHF-UCL"/>
</dbReference>
<dbReference type="GO" id="GO:0043517">
    <property type="term" value="P:positive regulation of DNA damage response, signal transduction by p53 class mediator"/>
    <property type="evidence" value="ECO:0000314"/>
    <property type="project" value="BHF-UCL"/>
</dbReference>
<dbReference type="GO" id="GO:0010976">
    <property type="term" value="P:positive regulation of neuron projection development"/>
    <property type="evidence" value="ECO:0007669"/>
    <property type="project" value="Ensembl"/>
</dbReference>
<dbReference type="GO" id="GO:0050714">
    <property type="term" value="P:positive regulation of protein secretion"/>
    <property type="evidence" value="ECO:0000315"/>
    <property type="project" value="UniProtKB"/>
</dbReference>
<dbReference type="GO" id="GO:0006357">
    <property type="term" value="P:regulation of transcription by RNA polymerase II"/>
    <property type="evidence" value="ECO:0000318"/>
    <property type="project" value="GO_Central"/>
</dbReference>
<dbReference type="GO" id="GO:0035994">
    <property type="term" value="P:response to muscle stretch"/>
    <property type="evidence" value="ECO:0000315"/>
    <property type="project" value="BHF-UCL"/>
</dbReference>
<dbReference type="GO" id="GO:0045214">
    <property type="term" value="P:sarcomere organization"/>
    <property type="evidence" value="ECO:0000303"/>
    <property type="project" value="BHF-UCL"/>
</dbReference>
<dbReference type="GO" id="GO:0035914">
    <property type="term" value="P:skeletal muscle cell differentiation"/>
    <property type="evidence" value="ECO:0007669"/>
    <property type="project" value="Ensembl"/>
</dbReference>
<dbReference type="FunFam" id="1.25.40.20:FF:000111">
    <property type="entry name" value="Ankyrin repeat domain-containing protein 1"/>
    <property type="match status" value="1"/>
</dbReference>
<dbReference type="FunFam" id="1.25.40.20:FF:000369">
    <property type="entry name" value="Ankyrin repeat domain-containing protein 1"/>
    <property type="match status" value="1"/>
</dbReference>
<dbReference type="Gene3D" id="1.25.40.20">
    <property type="entry name" value="Ankyrin repeat-containing domain"/>
    <property type="match status" value="2"/>
</dbReference>
<dbReference type="InterPro" id="IPR002110">
    <property type="entry name" value="Ankyrin_rpt"/>
</dbReference>
<dbReference type="InterPro" id="IPR036770">
    <property type="entry name" value="Ankyrin_rpt-contain_sf"/>
</dbReference>
<dbReference type="PANTHER" id="PTHR24126:SF7">
    <property type="entry name" value="ANKYRIN REPEAT DOMAIN-CONTAINING PROTEIN 1"/>
    <property type="match status" value="1"/>
</dbReference>
<dbReference type="PANTHER" id="PTHR24126">
    <property type="entry name" value="ANKYRIN REPEAT, PH AND SEC7 DOMAIN CONTAINING PROTEIN SECG-RELATED"/>
    <property type="match status" value="1"/>
</dbReference>
<dbReference type="Pfam" id="PF12796">
    <property type="entry name" value="Ank_2"/>
    <property type="match status" value="2"/>
</dbReference>
<dbReference type="PRINTS" id="PR01415">
    <property type="entry name" value="ANKYRIN"/>
</dbReference>
<dbReference type="SMART" id="SM00248">
    <property type="entry name" value="ANK"/>
    <property type="match status" value="4"/>
</dbReference>
<dbReference type="SUPFAM" id="SSF48403">
    <property type="entry name" value="Ankyrin repeat"/>
    <property type="match status" value="1"/>
</dbReference>
<dbReference type="PROSITE" id="PS50297">
    <property type="entry name" value="ANK_REP_REGION"/>
    <property type="match status" value="1"/>
</dbReference>
<dbReference type="PROSITE" id="PS50088">
    <property type="entry name" value="ANK_REPEAT"/>
    <property type="match status" value="4"/>
</dbReference>
<gene>
    <name type="primary">ANKRD1</name>
    <name type="synonym">C193</name>
    <name type="synonym">CARP</name>
    <name type="synonym">HA1A2</name>
</gene>
<evidence type="ECO:0000250" key="1"/>
<evidence type="ECO:0000255" key="2"/>
<evidence type="ECO:0000269" key="3">
    <source>
    </source>
</evidence>
<evidence type="ECO:0000269" key="4">
    <source>
    </source>
</evidence>
<evidence type="ECO:0000269" key="5">
    <source>
    </source>
</evidence>
<evidence type="ECO:0000269" key="6">
    <source>
    </source>
</evidence>
<evidence type="ECO:0000305" key="7"/>
<organism>
    <name type="scientific">Homo sapiens</name>
    <name type="common">Human</name>
    <dbReference type="NCBI Taxonomy" id="9606"/>
    <lineage>
        <taxon>Eukaryota</taxon>
        <taxon>Metazoa</taxon>
        <taxon>Chordata</taxon>
        <taxon>Craniata</taxon>
        <taxon>Vertebrata</taxon>
        <taxon>Euteleostomi</taxon>
        <taxon>Mammalia</taxon>
        <taxon>Eutheria</taxon>
        <taxon>Euarchontoglires</taxon>
        <taxon>Primates</taxon>
        <taxon>Haplorrhini</taxon>
        <taxon>Catarrhini</taxon>
        <taxon>Hominidae</taxon>
        <taxon>Homo</taxon>
    </lineage>
</organism>
<sequence length="319" mass="36252">MMVLKVEELVTGKKNGNGEAGEFLPEDFRDGEYEAAVTLEKQEDLKTLLAHPVTLGEQQWKSEKQREAELKKKKLEQRSKLENLEDLEIIIQLKKRKKYRKTKVPVVKEPEPEIITEPVDVPTFLKAALENKLPVVEKFLSDKNNPDVCDEYKRTALHRACLEGHLAIVEKLMEAGAQIEFRDMLESTAIHWASRGGNLDVLKLLLNKGAKISARDKLLSTALHVAVRTGHYECAEHLIACEADLNAKDREGDTPLHDAVRLNRYKMIRLLIMYGADLNIKNCAGKTPMDLVLHWQNGTKAIFDSLRENSYKTSRIATF</sequence>
<proteinExistence type="evidence at protein level"/>
<comment type="function">
    <text evidence="4 6">May play an important role in endothelial cell activation. May act as a nuclear transcription factor that negatively regulates the expression of cardiac genes. Induction seems to be correlated with apoptotic cell death in hepatoma cells.</text>
</comment>
<comment type="subunit">
    <text evidence="1 3">Interacts with YBX1 (By similarity). Interacts with TTN/titin.</text>
</comment>
<comment type="interaction">
    <interactant intactId="EBI-5653378">
        <id>Q15327</id>
    </interactant>
    <interactant intactId="EBI-5278764">
        <id>Q96GN5</id>
        <label>CDCA7L</label>
    </interactant>
    <organismsDiffer>false</organismsDiffer>
    <experiments>3</experiments>
</comment>
<comment type="interaction">
    <interactant intactId="EBI-5653378">
        <id>Q15327</id>
    </interactant>
    <interactant intactId="EBI-726739">
        <id>Q9UPY8</id>
        <label>MAPRE3</label>
    </interactant>
    <organismsDiffer>false</organismsDiffer>
    <experiments>5</experiments>
</comment>
<comment type="interaction">
    <interactant intactId="EBI-5653378">
        <id>Q15327</id>
    </interactant>
    <interactant intactId="EBI-16439278">
        <id>Q6FHY5</id>
        <label>MEOX2</label>
    </interactant>
    <organismsDiffer>false</organismsDiffer>
    <experiments>3</experiments>
</comment>
<comment type="interaction">
    <interactant intactId="EBI-5653378">
        <id>Q15327</id>
    </interactant>
    <interactant intactId="EBI-11526455">
        <id>Q9UJ70-2</id>
        <label>NAGK</label>
    </interactant>
    <organismsDiffer>false</organismsDiffer>
    <experiments>3</experiments>
</comment>
<comment type="interaction">
    <interactant intactId="EBI-5653378">
        <id>Q15327</id>
    </interactant>
    <interactant intactId="EBI-12023934">
        <id>Q5MJ10</id>
        <label>SPANXN2</label>
    </interactant>
    <organismsDiffer>false</organismsDiffer>
    <experiments>3</experiments>
</comment>
<comment type="interaction">
    <interactant intactId="EBI-5653378">
        <id>Q15327</id>
    </interactant>
    <interactant intactId="EBI-740232">
        <id>Q9NWS9-2</id>
        <label>ZNF446</label>
    </interactant>
    <organismsDiffer>false</organismsDiffer>
    <experiments>6</experiments>
</comment>
<comment type="subcellular location">
    <subcellularLocation>
        <location evidence="4 6">Nucleus</location>
    </subcellularLocation>
</comment>
<comment type="tissue specificity">
    <text evidence="4 6">Mainly expressed in activated vascular endothelial cells. To a lower extent, also expressed in hepatoma cells.</text>
</comment>
<comment type="induction">
    <text evidence="4 6">By TNF, IL1A/interleukin-1 alpha and parthenolide.</text>
</comment>
<reference key="1">
    <citation type="journal article" date="1995" name="J. Biol. Chem.">
        <title>Identification and characterization of a novel cytokine-inducible nuclear protein from human endothelial cells.</title>
        <authorList>
            <person name="Chu W."/>
            <person name="Burns D.K."/>
            <person name="Swerlick R.A."/>
            <person name="Presky D.H."/>
        </authorList>
    </citation>
    <scope>NUCLEOTIDE SEQUENCE [MRNA]</scope>
    <scope>INDUCTION BY TNF AND IL1A</scope>
    <scope>TISSUE SPECIFICITY</scope>
    <scope>SUBCELLULAR LOCATION</scope>
    <scope>FUNCTION</scope>
    <source>
        <tissue>Skin</tissue>
    </source>
</reference>
<reference key="2">
    <citation type="journal article" date="2005" name="Cancer Res.">
        <title>Identification of the genes involved in enhanced fenretinide-induced apoptosis by parthenolide in human hepatoma cells.</title>
        <authorList>
            <person name="Park J.-H."/>
            <person name="Liu L."/>
            <person name="Kim I.-H."/>
            <person name="Kim J.-H."/>
            <person name="You K.-R."/>
            <person name="Kim D.-G."/>
        </authorList>
    </citation>
    <scope>NUCLEOTIDE SEQUENCE [MRNA]</scope>
    <scope>INDUCTION BY PARTHELONIDE</scope>
    <scope>FUNCTION</scope>
    <scope>TISSUE SPECIFICITY</scope>
    <scope>SUBCELLULAR LOCATION</scope>
</reference>
<reference key="3">
    <citation type="journal article" date="2004" name="Nature">
        <title>The DNA sequence and comparative analysis of human chromosome 10.</title>
        <authorList>
            <person name="Deloukas P."/>
            <person name="Earthrowl M.E."/>
            <person name="Grafham D.V."/>
            <person name="Rubenfield M."/>
            <person name="French L."/>
            <person name="Steward C.A."/>
            <person name="Sims S.K."/>
            <person name="Jones M.C."/>
            <person name="Searle S."/>
            <person name="Scott C."/>
            <person name="Howe K."/>
            <person name="Hunt S.E."/>
            <person name="Andrews T.D."/>
            <person name="Gilbert J.G.R."/>
            <person name="Swarbreck D."/>
            <person name="Ashurst J.L."/>
            <person name="Taylor A."/>
            <person name="Battles J."/>
            <person name="Bird C.P."/>
            <person name="Ainscough R."/>
            <person name="Almeida J.P."/>
            <person name="Ashwell R.I.S."/>
            <person name="Ambrose K.D."/>
            <person name="Babbage A.K."/>
            <person name="Bagguley C.L."/>
            <person name="Bailey J."/>
            <person name="Banerjee R."/>
            <person name="Bates K."/>
            <person name="Beasley H."/>
            <person name="Bray-Allen S."/>
            <person name="Brown A.J."/>
            <person name="Brown J.Y."/>
            <person name="Burford D.C."/>
            <person name="Burrill W."/>
            <person name="Burton J."/>
            <person name="Cahill P."/>
            <person name="Camire D."/>
            <person name="Carter N.P."/>
            <person name="Chapman J.C."/>
            <person name="Clark S.Y."/>
            <person name="Clarke G."/>
            <person name="Clee C.M."/>
            <person name="Clegg S."/>
            <person name="Corby N."/>
            <person name="Coulson A."/>
            <person name="Dhami P."/>
            <person name="Dutta I."/>
            <person name="Dunn M."/>
            <person name="Faulkner L."/>
            <person name="Frankish A."/>
            <person name="Frankland J.A."/>
            <person name="Garner P."/>
            <person name="Garnett J."/>
            <person name="Gribble S."/>
            <person name="Griffiths C."/>
            <person name="Grocock R."/>
            <person name="Gustafson E."/>
            <person name="Hammond S."/>
            <person name="Harley J.L."/>
            <person name="Hart E."/>
            <person name="Heath P.D."/>
            <person name="Ho T.P."/>
            <person name="Hopkins B."/>
            <person name="Horne J."/>
            <person name="Howden P.J."/>
            <person name="Huckle E."/>
            <person name="Hynds C."/>
            <person name="Johnson C."/>
            <person name="Johnson D."/>
            <person name="Kana A."/>
            <person name="Kay M."/>
            <person name="Kimberley A.M."/>
            <person name="Kershaw J.K."/>
            <person name="Kokkinaki M."/>
            <person name="Laird G.K."/>
            <person name="Lawlor S."/>
            <person name="Lee H.M."/>
            <person name="Leongamornlert D.A."/>
            <person name="Laird G."/>
            <person name="Lloyd C."/>
            <person name="Lloyd D.M."/>
            <person name="Loveland J."/>
            <person name="Lovell J."/>
            <person name="McLaren S."/>
            <person name="McLay K.E."/>
            <person name="McMurray A."/>
            <person name="Mashreghi-Mohammadi M."/>
            <person name="Matthews L."/>
            <person name="Milne S."/>
            <person name="Nickerson T."/>
            <person name="Nguyen M."/>
            <person name="Overton-Larty E."/>
            <person name="Palmer S.A."/>
            <person name="Pearce A.V."/>
            <person name="Peck A.I."/>
            <person name="Pelan S."/>
            <person name="Phillimore B."/>
            <person name="Porter K."/>
            <person name="Rice C.M."/>
            <person name="Rogosin A."/>
            <person name="Ross M.T."/>
            <person name="Sarafidou T."/>
            <person name="Sehra H.K."/>
            <person name="Shownkeen R."/>
            <person name="Skuce C.D."/>
            <person name="Smith M."/>
            <person name="Standring L."/>
            <person name="Sycamore N."/>
            <person name="Tester J."/>
            <person name="Thorpe A."/>
            <person name="Torcasso W."/>
            <person name="Tracey A."/>
            <person name="Tromans A."/>
            <person name="Tsolas J."/>
            <person name="Wall M."/>
            <person name="Walsh J."/>
            <person name="Wang H."/>
            <person name="Weinstock K."/>
            <person name="West A.P."/>
            <person name="Willey D.L."/>
            <person name="Whitehead S.L."/>
            <person name="Wilming L."/>
            <person name="Wray P.W."/>
            <person name="Young L."/>
            <person name="Chen Y."/>
            <person name="Lovering R.C."/>
            <person name="Moschonas N.K."/>
            <person name="Siebert R."/>
            <person name="Fechtel K."/>
            <person name="Bentley D."/>
            <person name="Durbin R.M."/>
            <person name="Hubbard T."/>
            <person name="Doucette-Stamm L."/>
            <person name="Beck S."/>
            <person name="Smith D.R."/>
            <person name="Rogers J."/>
        </authorList>
    </citation>
    <scope>NUCLEOTIDE SEQUENCE [LARGE SCALE GENOMIC DNA]</scope>
</reference>
<reference key="4">
    <citation type="journal article" date="2004" name="Genome Res.">
        <title>The status, quality, and expansion of the NIH full-length cDNA project: the Mammalian Gene Collection (MGC).</title>
        <authorList>
            <consortium name="The MGC Project Team"/>
        </authorList>
    </citation>
    <scope>NUCLEOTIDE SEQUENCE [LARGE SCALE MRNA]</scope>
    <source>
        <tissue>Skeletal muscle</tissue>
    </source>
</reference>
<reference key="5">
    <citation type="journal article" date="2003" name="J. Mol. Biol.">
        <title>The muscle ankyrin repeat proteins: CARP, ankrd2/Arpp and DARP as a family of titin filament-based stress response molecules.</title>
        <authorList>
            <person name="Miller M.K."/>
            <person name="Bang M.-L."/>
            <person name="Witt C.C."/>
            <person name="Labeit D."/>
            <person name="Trombitas C."/>
            <person name="Watanabe K."/>
            <person name="Granzier H."/>
            <person name="McElhinny A.S."/>
            <person name="Gregorio C.C."/>
            <person name="Labeit S."/>
        </authorList>
    </citation>
    <scope>INTERACTION WITH TTN</scope>
</reference>
<reference key="6">
    <citation type="journal article" date="2008" name="Hum. Mutat.">
        <title>Transcriptional deregulation and a missense mutation define ANKRD1 as a candidate gene for total anomalous pulmonary venous return.</title>
        <authorList>
            <person name="Cinquetti R."/>
            <person name="Badi I."/>
            <person name="Campione M."/>
            <person name="Bortoletto E."/>
            <person name="Chiesa G."/>
            <person name="Parolini C."/>
            <person name="Camesasca C."/>
            <person name="Russo A."/>
            <person name="Taramelli R."/>
            <person name="Acquati F."/>
        </authorList>
    </citation>
    <scope>VARIANT MET-116</scope>
</reference>